<dbReference type="EC" id="1.6.2.2" evidence="5 6 7 10"/>
<dbReference type="PDB" id="1NDH">
    <property type="method" value="X-ray"/>
    <property type="resolution" value="2.10 A"/>
    <property type="chains" value="A=1-272"/>
</dbReference>
<dbReference type="PDB" id="3W2E">
    <property type="method" value="X-ray"/>
    <property type="resolution" value="2.10 A"/>
    <property type="chains" value="A=2-272"/>
</dbReference>
<dbReference type="PDB" id="3W2F">
    <property type="method" value="X-ray"/>
    <property type="resolution" value="1.76 A"/>
    <property type="chains" value="A=2-272"/>
</dbReference>
<dbReference type="PDB" id="3W2G">
    <property type="method" value="X-ray"/>
    <property type="resolution" value="1.68 A"/>
    <property type="chains" value="A=2-272"/>
</dbReference>
<dbReference type="PDB" id="3W2H">
    <property type="method" value="X-ray"/>
    <property type="resolution" value="1.75 A"/>
    <property type="chains" value="A=2-272"/>
</dbReference>
<dbReference type="PDB" id="3W2I">
    <property type="method" value="X-ray"/>
    <property type="resolution" value="1.81 A"/>
    <property type="chains" value="A=2-272"/>
</dbReference>
<dbReference type="PDB" id="3W5H">
    <property type="method" value="X-ray"/>
    <property type="resolution" value="0.78 A"/>
    <property type="chains" value="A=1-272"/>
</dbReference>
<dbReference type="PDB" id="5GV7">
    <property type="method" value="X-ray"/>
    <property type="resolution" value="0.80 A"/>
    <property type="chains" value="A=1-272"/>
</dbReference>
<dbReference type="PDB" id="5GV8">
    <property type="method" value="X-ray"/>
    <property type="resolution" value="0.78 A"/>
    <property type="chains" value="A=1-272"/>
</dbReference>
<dbReference type="PDBsum" id="1NDH"/>
<dbReference type="PDBsum" id="3W2E"/>
<dbReference type="PDBsum" id="3W2F"/>
<dbReference type="PDBsum" id="3W2G"/>
<dbReference type="PDBsum" id="3W2H"/>
<dbReference type="PDBsum" id="3W2I"/>
<dbReference type="PDBsum" id="3W5H"/>
<dbReference type="PDBsum" id="5GV7"/>
<dbReference type="PDBsum" id="5GV8"/>
<dbReference type="SMR" id="P83686"/>
<dbReference type="CORUM" id="P83686"/>
<dbReference type="FunCoup" id="P83686">
    <property type="interactions" value="302"/>
</dbReference>
<dbReference type="STRING" id="9823.ENSSSCP00000060127"/>
<dbReference type="PaxDb" id="9823-ENSSSCP00000000040"/>
<dbReference type="PeptideAtlas" id="P83686"/>
<dbReference type="eggNOG" id="KOG0534">
    <property type="taxonomic scope" value="Eukaryota"/>
</dbReference>
<dbReference type="InParanoid" id="P83686"/>
<dbReference type="BRENDA" id="1.6.2.2">
    <property type="organism ID" value="6170"/>
</dbReference>
<dbReference type="SABIO-RK" id="P83686"/>
<dbReference type="EvolutionaryTrace" id="P83686"/>
<dbReference type="Proteomes" id="UP000008227">
    <property type="component" value="Unplaced"/>
</dbReference>
<dbReference type="Proteomes" id="UP000314985">
    <property type="component" value="Unplaced"/>
</dbReference>
<dbReference type="Proteomes" id="UP000694570">
    <property type="component" value="Unplaced"/>
</dbReference>
<dbReference type="Proteomes" id="UP000694571">
    <property type="component" value="Unplaced"/>
</dbReference>
<dbReference type="Proteomes" id="UP000694720">
    <property type="component" value="Unplaced"/>
</dbReference>
<dbReference type="Proteomes" id="UP000694722">
    <property type="component" value="Unplaced"/>
</dbReference>
<dbReference type="Proteomes" id="UP000694723">
    <property type="component" value="Unplaced"/>
</dbReference>
<dbReference type="Proteomes" id="UP000694724">
    <property type="component" value="Unplaced"/>
</dbReference>
<dbReference type="Proteomes" id="UP000694725">
    <property type="component" value="Unplaced"/>
</dbReference>
<dbReference type="Proteomes" id="UP000694726">
    <property type="component" value="Unplaced"/>
</dbReference>
<dbReference type="Proteomes" id="UP000694727">
    <property type="component" value="Unplaced"/>
</dbReference>
<dbReference type="Proteomes" id="UP000694728">
    <property type="component" value="Unplaced"/>
</dbReference>
<dbReference type="GO" id="GO:0005789">
    <property type="term" value="C:endoplasmic reticulum membrane"/>
    <property type="evidence" value="ECO:0000250"/>
    <property type="project" value="UniProtKB"/>
</dbReference>
<dbReference type="GO" id="GO:0005741">
    <property type="term" value="C:mitochondrial outer membrane"/>
    <property type="evidence" value="ECO:0000250"/>
    <property type="project" value="UniProtKB"/>
</dbReference>
<dbReference type="GO" id="GO:0005739">
    <property type="term" value="C:mitochondrion"/>
    <property type="evidence" value="ECO:0000318"/>
    <property type="project" value="GO_Central"/>
</dbReference>
<dbReference type="GO" id="GO:0004128">
    <property type="term" value="F:cytochrome-b5 reductase activity, acting on NAD(P)H"/>
    <property type="evidence" value="ECO:0000314"/>
    <property type="project" value="UniProtKB"/>
</dbReference>
<dbReference type="GO" id="GO:0071949">
    <property type="term" value="F:FAD binding"/>
    <property type="evidence" value="ECO:0000315"/>
    <property type="project" value="UniProtKB"/>
</dbReference>
<dbReference type="GO" id="GO:0050660">
    <property type="term" value="F:flavin adenine dinucleotide binding"/>
    <property type="evidence" value="ECO:0000314"/>
    <property type="project" value="UniProtKB"/>
</dbReference>
<dbReference type="GO" id="GO:0006695">
    <property type="term" value="P:cholesterol biosynthetic process"/>
    <property type="evidence" value="ECO:0007669"/>
    <property type="project" value="UniProtKB-KW"/>
</dbReference>
<dbReference type="CDD" id="cd06183">
    <property type="entry name" value="cyt_b5_reduct_like"/>
    <property type="match status" value="1"/>
</dbReference>
<dbReference type="FunFam" id="2.40.30.10:FF:000021">
    <property type="entry name" value="NADH-cytochrome b5 reductase"/>
    <property type="match status" value="1"/>
</dbReference>
<dbReference type="FunFam" id="3.40.50.80:FF:000005">
    <property type="entry name" value="NADH-cytochrome b5 reductase"/>
    <property type="match status" value="1"/>
</dbReference>
<dbReference type="Gene3D" id="3.40.50.80">
    <property type="entry name" value="Nucleotide-binding domain of ferredoxin-NADP reductase (FNR) module"/>
    <property type="match status" value="1"/>
</dbReference>
<dbReference type="Gene3D" id="2.40.30.10">
    <property type="entry name" value="Translation factors"/>
    <property type="match status" value="1"/>
</dbReference>
<dbReference type="InterPro" id="IPR001834">
    <property type="entry name" value="CBR-like"/>
</dbReference>
<dbReference type="InterPro" id="IPR008333">
    <property type="entry name" value="Cbr1-like_FAD-bd_dom"/>
</dbReference>
<dbReference type="InterPro" id="IPR017927">
    <property type="entry name" value="FAD-bd_FR_type"/>
</dbReference>
<dbReference type="InterPro" id="IPR001709">
    <property type="entry name" value="Flavoprot_Pyr_Nucl_cyt_Rdtase"/>
</dbReference>
<dbReference type="InterPro" id="IPR039261">
    <property type="entry name" value="FNR_nucleotide-bd"/>
</dbReference>
<dbReference type="InterPro" id="IPR001433">
    <property type="entry name" value="OxRdtase_FAD/NAD-bd"/>
</dbReference>
<dbReference type="InterPro" id="IPR017938">
    <property type="entry name" value="Riboflavin_synthase-like_b-brl"/>
</dbReference>
<dbReference type="PANTHER" id="PTHR19370">
    <property type="entry name" value="NADH-CYTOCHROME B5 REDUCTASE"/>
    <property type="match status" value="1"/>
</dbReference>
<dbReference type="PANTHER" id="PTHR19370:SF121">
    <property type="entry name" value="NADH-CYTOCHROME B5 REDUCTASE 3"/>
    <property type="match status" value="1"/>
</dbReference>
<dbReference type="Pfam" id="PF00970">
    <property type="entry name" value="FAD_binding_6"/>
    <property type="match status" value="1"/>
</dbReference>
<dbReference type="Pfam" id="PF00175">
    <property type="entry name" value="NAD_binding_1"/>
    <property type="match status" value="1"/>
</dbReference>
<dbReference type="PRINTS" id="PR00406">
    <property type="entry name" value="CYTB5RDTASE"/>
</dbReference>
<dbReference type="PRINTS" id="PR00371">
    <property type="entry name" value="FPNCR"/>
</dbReference>
<dbReference type="SUPFAM" id="SSF52343">
    <property type="entry name" value="Ferredoxin reductase-like, C-terminal NADP-linked domain"/>
    <property type="match status" value="1"/>
</dbReference>
<dbReference type="SUPFAM" id="SSF63380">
    <property type="entry name" value="Riboflavin synthase domain-like"/>
    <property type="match status" value="1"/>
</dbReference>
<dbReference type="PROSITE" id="PS51384">
    <property type="entry name" value="FAD_FR"/>
    <property type="match status" value="1"/>
</dbReference>
<proteinExistence type="evidence at protein level"/>
<gene>
    <name type="primary">CYB5R3</name>
    <name type="synonym">DIA1</name>
</gene>
<feature type="chain" id="PRO_0000167625" description="NADH-cytochrome b5 reductase 3">
    <location>
        <begin position="1" status="less than"/>
        <end position="272"/>
    </location>
</feature>
<feature type="domain" description="FAD-binding FR-type" evidence="4">
    <location>
        <begin position="11"/>
        <end position="123"/>
    </location>
</feature>
<feature type="binding site" evidence="13 17">
    <location>
        <position position="63"/>
    </location>
    <ligand>
        <name>FAD</name>
        <dbReference type="ChEBI" id="CHEBI:57692"/>
    </ligand>
</feature>
<feature type="binding site" evidence="13 17">
    <location>
        <position position="64"/>
    </location>
    <ligand>
        <name>FAD</name>
        <dbReference type="ChEBI" id="CHEBI:57692"/>
    </ligand>
</feature>
<feature type="binding site" evidence="13 17">
    <location>
        <position position="65"/>
    </location>
    <ligand>
        <name>FAD</name>
        <dbReference type="ChEBI" id="CHEBI:57692"/>
    </ligand>
</feature>
<feature type="binding site" evidence="1">
    <location>
        <position position="80"/>
    </location>
    <ligand>
        <name>FAD</name>
        <dbReference type="ChEBI" id="CHEBI:57692"/>
    </ligand>
</feature>
<feature type="binding site" evidence="1">
    <location>
        <position position="82"/>
    </location>
    <ligand>
        <name>FAD</name>
        <dbReference type="ChEBI" id="CHEBI:57692"/>
    </ligand>
</feature>
<feature type="binding site" evidence="1">
    <location>
        <position position="84"/>
    </location>
    <ligand>
        <name>FAD</name>
        <dbReference type="ChEBI" id="CHEBI:57692"/>
    </ligand>
</feature>
<feature type="binding site" evidence="13 17">
    <location>
        <position position="97"/>
    </location>
    <ligand>
        <name>FAD</name>
        <dbReference type="ChEBI" id="CHEBI:57692"/>
    </ligand>
</feature>
<feature type="binding site" evidence="13 17">
    <location>
        <position position="98"/>
    </location>
    <ligand>
        <name>FAD</name>
        <dbReference type="ChEBI" id="CHEBI:57692"/>
    </ligand>
</feature>
<feature type="binding site" evidence="13 17">
    <location>
        <position position="99"/>
    </location>
    <ligand>
        <name>FAD</name>
        <dbReference type="ChEBI" id="CHEBI:57692"/>
    </ligand>
</feature>
<feature type="binding site" evidence="1">
    <location>
        <position position="156"/>
    </location>
    <ligand>
        <name>FAD</name>
        <dbReference type="ChEBI" id="CHEBI:57692"/>
    </ligand>
</feature>
<feature type="modified residue" description="N6-acetyllysine" evidence="1">
    <location>
        <position position="13"/>
    </location>
</feature>
<feature type="modified residue" description="Phosphotyrosine" evidence="1">
    <location>
        <position position="14"/>
    </location>
</feature>
<feature type="modified residue" description="N6-acetyllysine" evidence="3">
    <location>
        <position position="21"/>
    </location>
</feature>
<feature type="modified residue" description="N6-acetyllysine" evidence="3">
    <location>
        <position position="91"/>
    </location>
</feature>
<feature type="mutagenesis site" description="Similar properties to wild-type." evidence="5">
    <original>H</original>
    <variation>A</variation>
    <location>
        <position position="49"/>
    </location>
</feature>
<feature type="mutagenesis site" description="Increase and decrease in Km values for Fe(II)-[cytochrome b5 and NADH respectively." evidence="5">
    <original>H</original>
    <variation>E</variation>
    <location>
        <position position="49"/>
    </location>
</feature>
<feature type="mutagenesis site" description="Decrease and increase in Km values for Fe(II)-[cytochrome b5 and NADH respectively." evidence="5">
    <original>H</original>
    <variation>K</variation>
    <location>
        <position position="49"/>
    </location>
</feature>
<feature type="mutagenesis site" description="Similar properties to wild-type." evidence="5">
    <original>H</original>
    <variation>Y</variation>
    <location>
        <position position="49"/>
    </location>
</feature>
<feature type="mutagenesis site" description="Increased Km values for NADH and increased dissociation constant for NAD(+)." evidence="6">
    <original>R</original>
    <variation>A</variation>
    <variation>Q</variation>
    <location>
        <position position="63"/>
    </location>
</feature>
<feature type="mutagenesis site" description="Km values for NADH and Fe(II)-[cytochrome b5 similar to that of wild-type." evidence="6">
    <original>R</original>
    <variation>K</variation>
    <location>
        <position position="63"/>
    </location>
</feature>
<feature type="mutagenesis site" description="Protein destabilized, release of FAD accelerated, and kcat values decreased." evidence="6">
    <original>Y</original>
    <variation>A</variation>
    <variation>F</variation>
    <location>
        <position position="65"/>
    </location>
</feature>
<feature type="mutagenesis site" description="Similar properties to wild-type." evidence="7">
    <original>T</original>
    <variation>A</variation>
    <location>
        <position position="66"/>
    </location>
</feature>
<feature type="mutagenesis site" description="Similar properties to wild-type." evidence="7">
    <original>T</original>
    <variation>S</variation>
    <location>
        <position position="66"/>
    </location>
</feature>
<feature type="mutagenesis site" description="10% of wild-type kcat values." evidence="7">
    <original>T</original>
    <variation>V</variation>
    <location>
        <position position="66"/>
    </location>
</feature>
<feature type="mutagenesis site" description="Little effect on absorption or CD spectra." evidence="6">
    <original>K</original>
    <variation>A</variation>
    <location>
        <position position="97"/>
    </location>
</feature>
<feature type="mutagenesis site" description="Little effect on absorption or CD spectra." evidence="6">
    <original>K</original>
    <variation>R</variation>
    <location>
        <position position="97"/>
    </location>
</feature>
<feature type="mutagenesis site" description="Increased Km values for NADH and increased dissociation constant for NAD(+)." evidence="6">
    <original>S</original>
    <variation>A</variation>
    <variation>V</variation>
    <location>
        <position position="99"/>
    </location>
</feature>
<feature type="mutagenesis site" description="Km values for NADH and Fe(II)-[cytochrome b5 similar to that of wild-type." evidence="6">
    <original>S</original>
    <variation>T</variation>
    <location>
        <position position="99"/>
    </location>
</feature>
<feature type="mutagenesis site" description="10% of wild-type kcat values." evidence="5">
    <original>F</original>
    <variation>FG</variation>
    <location>
        <position position="272"/>
    </location>
</feature>
<feature type="mutagenesis site" description="54% of wild-type kcat values." evidence="5">
    <location>
        <position position="272"/>
    </location>
</feature>
<feature type="sequence conflict" description="In Ref. 1." evidence="14" ref="1">
    <original>E</original>
    <variation>Q</variation>
    <location>
        <position position="39"/>
    </location>
</feature>
<feature type="non-terminal residue">
    <location>
        <position position="1"/>
    </location>
</feature>
<feature type="strand" evidence="21">
    <location>
        <begin position="14"/>
        <end position="25"/>
    </location>
</feature>
<feature type="strand" evidence="21">
    <location>
        <begin position="28"/>
        <end position="34"/>
    </location>
</feature>
<feature type="strand" evidence="21">
    <location>
        <begin position="49"/>
        <end position="56"/>
    </location>
</feature>
<feature type="strand" evidence="21">
    <location>
        <begin position="59"/>
        <end position="65"/>
    </location>
</feature>
<feature type="strand" evidence="19">
    <location>
        <begin position="67"/>
        <end position="69"/>
    </location>
</feature>
<feature type="strand" evidence="21">
    <location>
        <begin position="75"/>
        <end position="82"/>
    </location>
</feature>
<feature type="turn" evidence="20">
    <location>
        <begin position="86"/>
        <end position="88"/>
    </location>
</feature>
<feature type="strand" evidence="18">
    <location>
        <begin position="89"/>
        <end position="91"/>
    </location>
</feature>
<feature type="helix" evidence="21">
    <location>
        <begin position="97"/>
        <end position="104"/>
    </location>
</feature>
<feature type="strand" evidence="21">
    <location>
        <begin position="110"/>
        <end position="117"/>
    </location>
</feature>
<feature type="strand" evidence="21">
    <location>
        <begin position="119"/>
        <end position="124"/>
    </location>
</feature>
<feature type="strand" evidence="21">
    <location>
        <begin position="127"/>
        <end position="130"/>
    </location>
</feature>
<feature type="strand" evidence="18">
    <location>
        <begin position="132"/>
        <end position="135"/>
    </location>
</feature>
<feature type="strand" evidence="21">
    <location>
        <begin position="139"/>
        <end position="142"/>
    </location>
</feature>
<feature type="strand" evidence="21">
    <location>
        <begin position="144"/>
        <end position="151"/>
    </location>
</feature>
<feature type="helix" evidence="21">
    <location>
        <begin position="152"/>
        <end position="154"/>
    </location>
</feature>
<feature type="helix" evidence="21">
    <location>
        <begin position="155"/>
        <end position="166"/>
    </location>
</feature>
<feature type="strand" evidence="21">
    <location>
        <begin position="174"/>
        <end position="183"/>
    </location>
</feature>
<feature type="helix" evidence="21">
    <location>
        <begin position="184"/>
        <end position="186"/>
    </location>
</feature>
<feature type="helix" evidence="21">
    <location>
        <begin position="190"/>
        <end position="200"/>
    </location>
</feature>
<feature type="turn" evidence="21">
    <location>
        <begin position="201"/>
        <end position="203"/>
    </location>
</feature>
<feature type="strand" evidence="21">
    <location>
        <begin position="204"/>
        <end position="212"/>
    </location>
</feature>
<feature type="strand" evidence="21">
    <location>
        <begin position="218"/>
        <end position="223"/>
    </location>
</feature>
<feature type="helix" evidence="21">
    <location>
        <begin position="226"/>
        <end position="232"/>
    </location>
</feature>
<feature type="helix" evidence="21">
    <location>
        <begin position="236"/>
        <end position="238"/>
    </location>
</feature>
<feature type="strand" evidence="21">
    <location>
        <begin position="241"/>
        <end position="246"/>
    </location>
</feature>
<feature type="helix" evidence="21">
    <location>
        <begin position="248"/>
        <end position="253"/>
    </location>
</feature>
<feature type="helix" evidence="21">
    <location>
        <begin position="256"/>
        <end position="262"/>
    </location>
</feature>
<feature type="helix" evidence="21">
    <location>
        <begin position="266"/>
        <end position="268"/>
    </location>
</feature>
<feature type="strand" evidence="22">
    <location>
        <begin position="269"/>
        <end position="271"/>
    </location>
</feature>
<reference evidence="14" key="1">
    <citation type="journal article" date="1999" name="Biochim. Biophys. Acta">
        <title>Systematic mutations of highly conserved His49 and carboxyl-terminal of recombinant porcine liver NADH-cytochrome b5 reductase solubilized domain.</title>
        <authorList>
            <person name="Kimura S."/>
            <person name="Emi Y."/>
            <person name="Ikushiro S."/>
            <person name="Iyanagi T."/>
        </authorList>
    </citation>
    <scope>NUCLEOTIDE SEQUENCE [MRNA]</scope>
    <scope>PROTEIN SEQUENCE OF 1-5</scope>
    <scope>MUTAGENESIS OF HIS-49 AND PHE-272</scope>
    <scope>CIRCULAR DICHROISM ANALYSIS</scope>
    <scope>FUNCTION</scope>
    <scope>CATALYTIC ACTIVITY</scope>
    <scope>BIOPHYSICOCHEMICAL PROPERTIES</scope>
    <scope>COFACTOR</scope>
    <source>
        <tissue evidence="5">Liver</tissue>
    </source>
</reference>
<reference evidence="14" key="2">
    <citation type="journal article" date="1980" name="Biochem. Biophys. Res. Commun.">
        <title>Terminal sequences of lysosome solubilized pig liver cytochrome b5 reductase.</title>
        <authorList>
            <person name="Crabb J.W."/>
            <person name="Tarr G.E."/>
            <person name="Yasunobu K.T."/>
            <person name="Iyanagi T."/>
            <person name="Coon M.J."/>
        </authorList>
    </citation>
    <scope>PROTEIN SEQUENCE OF 1-20</scope>
    <source>
        <tissue evidence="11">Liver</tissue>
    </source>
</reference>
<reference evidence="14" key="3">
    <citation type="journal article" date="1985" name="Comp. Biochem. Physiol.">
        <title>Gastric microsomal NADH-cytochrome b5 reductase: characterization and solubilization.</title>
        <authorList>
            <person name="Ghesquier D."/>
            <person name="Robert J.C."/>
            <person name="Soumarmon A."/>
            <person name="Abastado M."/>
            <person name="Grelac F."/>
            <person name="Lewin M.J.M."/>
        </authorList>
    </citation>
    <scope>CATALYTIC ACTIVITY</scope>
    <scope>FUNCTION</scope>
</reference>
<reference evidence="14" key="4">
    <citation type="journal article" date="1995" name="FEBS Lett.">
        <title>Specific arrangement of three amino acid residues for flavin-binding barrel structures in NADH-cytochrome b5 reductase and the other flavin-dependent reductases.</title>
        <authorList>
            <person name="Nishida H."/>
            <person name="Inaka K."/>
            <person name="Miki K."/>
        </authorList>
    </citation>
    <scope>FAD-BINDING</scope>
</reference>
<reference evidence="14" key="5">
    <citation type="journal article" date="1977" name="Biochemistry">
        <title>Redox properties of microsomal reduced nicotinamide adenine dinucleotide-cytochrome b5 reductase and cytochrome b5.</title>
        <authorList>
            <person name="Iyanagi T."/>
        </authorList>
    </citation>
    <scope>POTENTIOMETRIC TITRATION</scope>
    <scope>EPR SPECTROSCOPY</scope>
</reference>
<reference evidence="14" key="6">
    <citation type="journal article" date="1988" name="J. Biol. Chem.">
        <title>One-electron reduction of hepatic NADH-cytochrome b5 reductase as studied by pulse radiolysis.</title>
        <authorList>
            <person name="Kobayashi K."/>
            <person name="Iyanagi T."/>
            <person name="Ohara H."/>
            <person name="Hayashi K."/>
        </authorList>
    </citation>
    <scope>FUNCTION</scope>
    <scope>CATALYTIC ACTIVITY</scope>
    <scope>COFACTOR</scope>
</reference>
<reference evidence="14" key="7">
    <citation type="journal article" date="2001" name="J. Biochem.">
        <title>Effects of flavin-binding motif amino acid mutations in the NADH-cytochrome b5 reductase catalytic domain on protein stability and catalysis.</title>
        <authorList>
            <person name="Kimura S."/>
            <person name="Nishida H."/>
            <person name="Iyanagi T."/>
        </authorList>
    </citation>
    <scope>MUTAGENESIS OF ARG-63; TYR-65; LYS-97 AND SER-99</scope>
    <scope>CIRCULAR DICHROISM ANALYSIS</scope>
    <scope>FUNCTION</scope>
    <scope>CATALYTIC ACTIVITY</scope>
    <scope>BIOPHYSICOCHEMICAL PROPERTIES</scope>
    <scope>COFACTOR</scope>
</reference>
<reference evidence="14" key="8">
    <citation type="journal article" date="2003" name="J. Biol. Chem.">
        <title>Role of Thr(66) in porcine NADH-cytochrome b5 reductase in catalysis and control of the rate-limiting step in electron transfer.</title>
        <authorList>
            <person name="Kimura S."/>
            <person name="Kawamura M."/>
            <person name="Iyanagi T."/>
        </authorList>
    </citation>
    <scope>MUTAGENESIS OF THR-66</scope>
    <scope>BIOPHYSICOCHEMICAL PROPERTIES</scope>
    <scope>CIRCULAR DICHROISM ANALYSIS</scope>
    <scope>FUNCTION</scope>
    <scope>CATALYTIC ACTIVITY</scope>
    <scope>COFACTOR</scope>
</reference>
<reference key="9">
    <citation type="journal article" date="2006" name="J. Biol. Chem.">
        <title>Identification of the missing component in the mitochondrial benzamidoxime prodrug converting system as a novel molybdenum enzyme.</title>
        <authorList>
            <person name="Havemeyer A."/>
            <person name="Bittner F."/>
            <person name="Wollers S."/>
            <person name="Mendel R."/>
            <person name="Kunze T."/>
            <person name="Clement B."/>
        </authorList>
    </citation>
    <scope>IDENTIFICATION IN A COMPLEX WITH CYTOCHROME B5 AND MTARC2</scope>
</reference>
<reference evidence="16" key="10">
    <citation type="journal article" date="1995" name="Biochemistry">
        <title>Crystal structure of NADH-cytochrome b5 reductase from pig liver at 2.4 A resolution.</title>
        <authorList>
            <person name="Nishida H."/>
            <person name="Inaka K."/>
            <person name="Yamanaka M."/>
            <person name="Kaida S."/>
            <person name="Kobayashi K."/>
            <person name="Miki K."/>
        </authorList>
    </citation>
    <scope>X-RAY CRYSTALLOGRAPHY (2.4 ANGSTROMS) OF 2-273</scope>
    <scope>FAD-BINDING</scope>
</reference>
<reference evidence="14" key="11">
    <citation type="journal article" date="1996" name="Proteins">
        <title>Electrostatic properties deduced from refined structures of NADH-cytochrome b5 reductase and the other flavin-dependent reductases: pyridine nucleotide-binding and interaction with an electron-transfer partner.</title>
        <authorList>
            <person name="Nishida H."/>
            <person name="Miki K."/>
        </authorList>
    </citation>
    <scope>X-RAY CRYSTALLOGRAPHY (2.1 ANGSTROMS)</scope>
    <scope>3D-STRUCTURE MODELING OF COMPLEX WITH CYTOCHROME B5</scope>
</reference>
<evidence type="ECO:0000250" key="1">
    <source>
        <dbReference type="UniProtKB" id="P00387"/>
    </source>
</evidence>
<evidence type="ECO:0000250" key="2">
    <source>
        <dbReference type="UniProtKB" id="P20070"/>
    </source>
</evidence>
<evidence type="ECO:0000250" key="3">
    <source>
        <dbReference type="UniProtKB" id="Q9DCN2"/>
    </source>
</evidence>
<evidence type="ECO:0000255" key="4">
    <source>
        <dbReference type="PROSITE-ProRule" id="PRU00716"/>
    </source>
</evidence>
<evidence type="ECO:0000269" key="5">
    <source>
    </source>
</evidence>
<evidence type="ECO:0000269" key="6">
    <source>
    </source>
</evidence>
<evidence type="ECO:0000269" key="7">
    <source>
    </source>
</evidence>
<evidence type="ECO:0000269" key="8">
    <source>
    </source>
</evidence>
<evidence type="ECO:0000269" key="9">
    <source>
    </source>
</evidence>
<evidence type="ECO:0000269" key="10">
    <source>
    </source>
</evidence>
<evidence type="ECO:0000269" key="11">
    <source>
    </source>
</evidence>
<evidence type="ECO:0000269" key="12">
    <source>
    </source>
</evidence>
<evidence type="ECO:0000269" key="13">
    <source>
    </source>
</evidence>
<evidence type="ECO:0000305" key="14"/>
<evidence type="ECO:0000305" key="15">
    <source>
    </source>
</evidence>
<evidence type="ECO:0000312" key="16">
    <source>
        <dbReference type="PDB" id="1NDH"/>
    </source>
</evidence>
<evidence type="ECO:0007744" key="17">
    <source>
        <dbReference type="PDB" id="1NDH"/>
    </source>
</evidence>
<evidence type="ECO:0007829" key="18">
    <source>
        <dbReference type="PDB" id="1NDH"/>
    </source>
</evidence>
<evidence type="ECO:0007829" key="19">
    <source>
        <dbReference type="PDB" id="3W2E"/>
    </source>
</evidence>
<evidence type="ECO:0007829" key="20">
    <source>
        <dbReference type="PDB" id="3W2G"/>
    </source>
</evidence>
<evidence type="ECO:0007829" key="21">
    <source>
        <dbReference type="PDB" id="3W5H"/>
    </source>
</evidence>
<evidence type="ECO:0007829" key="22">
    <source>
        <dbReference type="PDB" id="5GV7"/>
    </source>
</evidence>
<sequence>STPAITLENPDIKYPLRLIDKEVVNHDTRRFRFALPSPEHILGLPVGQHIYLSARIDGNLVIRPYTPVSSDDDKGFVDLVIKVYFKDTHPKFPAGGKMSQYLESMKIGDTIEFRGPNGLLVYQGKGKFAIRPDKKSSPVIKTVKSVGMIAGGTGITPMLQVIRAIMKDPDDHTVCHLLFANQTEKDILLRPELEELRNEHSARFKLWYTVDRAPEAWDYSQGFVNEEMIRDHLPPPEEEPLVLMCGPPPMIQYACLPNLERVGHPKERCFAF</sequence>
<keyword id="KW-0002">3D-structure</keyword>
<keyword id="KW-0007">Acetylation</keyword>
<keyword id="KW-0152">Cholesterol biosynthesis</keyword>
<keyword id="KW-0153">Cholesterol metabolism</keyword>
<keyword id="KW-0903">Direct protein sequencing</keyword>
<keyword id="KW-0256">Endoplasmic reticulum</keyword>
<keyword id="KW-0274">FAD</keyword>
<keyword id="KW-0285">Flavoprotein</keyword>
<keyword id="KW-0444">Lipid biosynthesis</keyword>
<keyword id="KW-0443">Lipid metabolism</keyword>
<keyword id="KW-0449">Lipoprotein</keyword>
<keyword id="KW-0472">Membrane</keyword>
<keyword id="KW-0496">Mitochondrion</keyword>
<keyword id="KW-1000">Mitochondrion outer membrane</keyword>
<keyword id="KW-0520">NAD</keyword>
<keyword id="KW-0560">Oxidoreductase</keyword>
<keyword id="KW-0597">Phosphoprotein</keyword>
<keyword id="KW-1185">Reference proteome</keyword>
<keyword id="KW-0752">Steroid biosynthesis</keyword>
<keyword id="KW-0753">Steroid metabolism</keyword>
<keyword id="KW-0756">Sterol biosynthesis</keyword>
<keyword id="KW-1207">Sterol metabolism</keyword>
<comment type="function">
    <text evidence="5 6 7 9 10">Catalyzes the reduction of two molecules of cytochrome b5 using NADH as the electron donor.</text>
</comment>
<comment type="catalytic activity">
    <reaction evidence="5 6 7 9 10">
        <text>2 Fe(III)-[cytochrome b5] + NADH = 2 Fe(II)-[cytochrome b5] + NAD(+) + H(+)</text>
        <dbReference type="Rhea" id="RHEA:46680"/>
        <dbReference type="Rhea" id="RHEA-COMP:10438"/>
        <dbReference type="Rhea" id="RHEA-COMP:10439"/>
        <dbReference type="ChEBI" id="CHEBI:15378"/>
        <dbReference type="ChEBI" id="CHEBI:29033"/>
        <dbReference type="ChEBI" id="CHEBI:29034"/>
        <dbReference type="ChEBI" id="CHEBI:57540"/>
        <dbReference type="ChEBI" id="CHEBI:57945"/>
        <dbReference type="EC" id="1.6.2.2"/>
    </reaction>
    <physiologicalReaction direction="left-to-right" evidence="15">
        <dbReference type="Rhea" id="RHEA:46681"/>
    </physiologicalReaction>
</comment>
<comment type="cofactor">
    <cofactor evidence="5 6 7 9 12">
        <name>FAD</name>
        <dbReference type="ChEBI" id="CHEBI:57692"/>
    </cofactor>
</comment>
<comment type="biophysicochemical properties">
    <kinetics>
        <KM evidence="5">1.5 uM for NADH</KM>
        <KM evidence="6 7">3.1 uM for NADH</KM>
        <KM evidence="5">9.1 uM for 2 Fe(II)-[cytochrome b5]</KM>
        <KM evidence="6">10.4 uM for 2 Fe(II)-[cytochrome b5]</KM>
        <KM evidence="6">19.8 uM for 2 Fe(II)-[cytochrome b5]</KM>
        <text evidence="5 6 7">kcat is 570 sec(-1) with NADH as substrate (PubMed:10082957). kcat is 560 sec(-1) with 2 Fe(II)-[cytochrome b5] as substrate (PubMed:10082957). kcat is 1100 sec(-1) with NADH as substrate (PubMed:11574067, PubMed:12459552). kcat is 661 sec(-1) with 2 Fe(II)-[cytochrome b5] as substrate (PubMed:11574067). kcat is 911 sec(-1) with 2 Fe(II)-[cytochrome b5] as substrate (PubMed:12459552).</text>
    </kinetics>
</comment>
<comment type="subunit">
    <text evidence="3 8">Component of a complex composed of cytochrome b5, NADH-cytochrome b5 reductase (CYB5R3) and MTARC2 (PubMed:16973608). Interacts with MTLN; the interaction is required to maintain cellular lipid composition and leads to stimulation of mitochondrial respiratory complex I activity (By similarity).</text>
</comment>
<comment type="subcellular location">
    <subcellularLocation>
        <location evidence="2">Endoplasmic reticulum membrane</location>
        <topology evidence="2">Lipid-anchor</topology>
        <orientation evidence="2">Cytoplasmic side</orientation>
    </subcellularLocation>
    <subcellularLocation>
        <location evidence="2">Mitochondrion outer membrane</location>
        <topology evidence="2">Lipid-anchor</topology>
        <orientation evidence="2">Cytoplasmic side</orientation>
    </subcellularLocation>
</comment>
<comment type="similarity">
    <text evidence="14">Belongs to the flavoprotein pyridine nucleotide cytochrome reductase family.</text>
</comment>
<protein>
    <recommendedName>
        <fullName evidence="14">NADH-cytochrome b5 reductase 3</fullName>
        <shortName>B5R</shortName>
        <shortName>Cytochrome b5 reductase</shortName>
        <ecNumber evidence="5 6 7 10">1.6.2.2</ecNumber>
    </recommendedName>
    <alternativeName>
        <fullName evidence="1">Diaphorase-1</fullName>
    </alternativeName>
</protein>
<accession>P83686</accession>
<name>NB5R3_PIG</name>
<organism evidence="16">
    <name type="scientific">Sus scrofa</name>
    <name type="common">Pig</name>
    <dbReference type="NCBI Taxonomy" id="9823"/>
    <lineage>
        <taxon>Eukaryota</taxon>
        <taxon>Metazoa</taxon>
        <taxon>Chordata</taxon>
        <taxon>Craniata</taxon>
        <taxon>Vertebrata</taxon>
        <taxon>Euteleostomi</taxon>
        <taxon>Mammalia</taxon>
        <taxon>Eutheria</taxon>
        <taxon>Laurasiatheria</taxon>
        <taxon>Artiodactyla</taxon>
        <taxon>Suina</taxon>
        <taxon>Suidae</taxon>
        <taxon>Sus</taxon>
    </lineage>
</organism>